<feature type="chain" id="PRO_0000116446" description="Meiotically up-regulated gene 151 protein">
    <location>
        <begin position="1"/>
        <end position="146"/>
    </location>
</feature>
<feature type="region of interest" description="Disordered" evidence="2">
    <location>
        <begin position="1"/>
        <end position="40"/>
    </location>
</feature>
<feature type="compositionally biased region" description="Basic and acidic residues" evidence="2">
    <location>
        <begin position="21"/>
        <end position="32"/>
    </location>
</feature>
<name>MU151_SCHPO</name>
<keyword id="KW-0469">Meiosis</keyword>
<keyword id="KW-0539">Nucleus</keyword>
<keyword id="KW-1185">Reference proteome</keyword>
<organism>
    <name type="scientific">Schizosaccharomyces pombe (strain 972 / ATCC 24843)</name>
    <name type="common">Fission yeast</name>
    <dbReference type="NCBI Taxonomy" id="284812"/>
    <lineage>
        <taxon>Eukaryota</taxon>
        <taxon>Fungi</taxon>
        <taxon>Dikarya</taxon>
        <taxon>Ascomycota</taxon>
        <taxon>Taphrinomycotina</taxon>
        <taxon>Schizosaccharomycetes</taxon>
        <taxon>Schizosaccharomycetales</taxon>
        <taxon>Schizosaccharomycetaceae</taxon>
        <taxon>Schizosaccharomyces</taxon>
    </lineage>
</organism>
<comment type="function">
    <text evidence="3">Has a role in meiosis.</text>
</comment>
<comment type="subcellular location">
    <subcellularLocation>
        <location evidence="1">Nucleus</location>
    </subcellularLocation>
</comment>
<accession>Q10069</accession>
<gene>
    <name type="primary">mug151</name>
    <name type="ORF">SPAC3H1.03</name>
</gene>
<sequence length="146" mass="17242">MSLVAYDSEEEEQTSLVNENNDIKGRSEEPHWKIPNSPKAEVDTELEKKIKQFIKLKAKGIHFHTRLSENENFRNPKLLDNLQDFLDIKEPRGTMISKDMWDPTDFHKNVYASALSKSQDEMIARRENYQKHDRTEIKFQTSQHPK</sequence>
<reference key="1">
    <citation type="journal article" date="2002" name="Nature">
        <title>The genome sequence of Schizosaccharomyces pombe.</title>
        <authorList>
            <person name="Wood V."/>
            <person name="Gwilliam R."/>
            <person name="Rajandream M.A."/>
            <person name="Lyne M.H."/>
            <person name="Lyne R."/>
            <person name="Stewart A."/>
            <person name="Sgouros J.G."/>
            <person name="Peat N."/>
            <person name="Hayles J."/>
            <person name="Baker S.G."/>
            <person name="Basham D."/>
            <person name="Bowman S."/>
            <person name="Brooks K."/>
            <person name="Brown D."/>
            <person name="Brown S."/>
            <person name="Chillingworth T."/>
            <person name="Churcher C.M."/>
            <person name="Collins M."/>
            <person name="Connor R."/>
            <person name="Cronin A."/>
            <person name="Davis P."/>
            <person name="Feltwell T."/>
            <person name="Fraser A."/>
            <person name="Gentles S."/>
            <person name="Goble A."/>
            <person name="Hamlin N."/>
            <person name="Harris D.E."/>
            <person name="Hidalgo J."/>
            <person name="Hodgson G."/>
            <person name="Holroyd S."/>
            <person name="Hornsby T."/>
            <person name="Howarth S."/>
            <person name="Huckle E.J."/>
            <person name="Hunt S."/>
            <person name="Jagels K."/>
            <person name="James K.D."/>
            <person name="Jones L."/>
            <person name="Jones M."/>
            <person name="Leather S."/>
            <person name="McDonald S."/>
            <person name="McLean J."/>
            <person name="Mooney P."/>
            <person name="Moule S."/>
            <person name="Mungall K.L."/>
            <person name="Murphy L.D."/>
            <person name="Niblett D."/>
            <person name="Odell C."/>
            <person name="Oliver K."/>
            <person name="O'Neil S."/>
            <person name="Pearson D."/>
            <person name="Quail M.A."/>
            <person name="Rabbinowitsch E."/>
            <person name="Rutherford K.M."/>
            <person name="Rutter S."/>
            <person name="Saunders D."/>
            <person name="Seeger K."/>
            <person name="Sharp S."/>
            <person name="Skelton J."/>
            <person name="Simmonds M.N."/>
            <person name="Squares R."/>
            <person name="Squares S."/>
            <person name="Stevens K."/>
            <person name="Taylor K."/>
            <person name="Taylor R.G."/>
            <person name="Tivey A."/>
            <person name="Walsh S.V."/>
            <person name="Warren T."/>
            <person name="Whitehead S."/>
            <person name="Woodward J.R."/>
            <person name="Volckaert G."/>
            <person name="Aert R."/>
            <person name="Robben J."/>
            <person name="Grymonprez B."/>
            <person name="Weltjens I."/>
            <person name="Vanstreels E."/>
            <person name="Rieger M."/>
            <person name="Schaefer M."/>
            <person name="Mueller-Auer S."/>
            <person name="Gabel C."/>
            <person name="Fuchs M."/>
            <person name="Duesterhoeft A."/>
            <person name="Fritzc C."/>
            <person name="Holzer E."/>
            <person name="Moestl D."/>
            <person name="Hilbert H."/>
            <person name="Borzym K."/>
            <person name="Langer I."/>
            <person name="Beck A."/>
            <person name="Lehrach H."/>
            <person name="Reinhardt R."/>
            <person name="Pohl T.M."/>
            <person name="Eger P."/>
            <person name="Zimmermann W."/>
            <person name="Wedler H."/>
            <person name="Wambutt R."/>
            <person name="Purnelle B."/>
            <person name="Goffeau A."/>
            <person name="Cadieu E."/>
            <person name="Dreano S."/>
            <person name="Gloux S."/>
            <person name="Lelaure V."/>
            <person name="Mottier S."/>
            <person name="Galibert F."/>
            <person name="Aves S.J."/>
            <person name="Xiang Z."/>
            <person name="Hunt C."/>
            <person name="Moore K."/>
            <person name="Hurst S.M."/>
            <person name="Lucas M."/>
            <person name="Rochet M."/>
            <person name="Gaillardin C."/>
            <person name="Tallada V.A."/>
            <person name="Garzon A."/>
            <person name="Thode G."/>
            <person name="Daga R.R."/>
            <person name="Cruzado L."/>
            <person name="Jimenez J."/>
            <person name="Sanchez M."/>
            <person name="del Rey F."/>
            <person name="Benito J."/>
            <person name="Dominguez A."/>
            <person name="Revuelta J.L."/>
            <person name="Moreno S."/>
            <person name="Armstrong J."/>
            <person name="Forsburg S.L."/>
            <person name="Cerutti L."/>
            <person name="Lowe T."/>
            <person name="McCombie W.R."/>
            <person name="Paulsen I."/>
            <person name="Potashkin J."/>
            <person name="Shpakovski G.V."/>
            <person name="Ussery D."/>
            <person name="Barrell B.G."/>
            <person name="Nurse P."/>
        </authorList>
    </citation>
    <scope>NUCLEOTIDE SEQUENCE [LARGE SCALE GENOMIC DNA]</scope>
    <source>
        <strain>972 / ATCC 24843</strain>
    </source>
</reference>
<reference key="2">
    <citation type="journal article" date="2005" name="Curr. Biol.">
        <title>A large-scale screen in S. pombe identifies seven novel genes required for critical meiotic events.</title>
        <authorList>
            <person name="Martin-Castellanos C."/>
            <person name="Blanco M."/>
            <person name="Rozalen A.E."/>
            <person name="Perez-Hidalgo L."/>
            <person name="Garcia A.I."/>
            <person name="Conde F."/>
            <person name="Mata J."/>
            <person name="Ellermeier C."/>
            <person name="Davis L."/>
            <person name="San-Segundo P."/>
            <person name="Smith G.R."/>
            <person name="Moreno S."/>
        </authorList>
    </citation>
    <scope>FUNCTION IN MEIOSIS</scope>
</reference>
<protein>
    <recommendedName>
        <fullName>Meiotically up-regulated gene 151 protein</fullName>
    </recommendedName>
</protein>
<proteinExistence type="evidence at protein level"/>
<evidence type="ECO:0000250" key="1"/>
<evidence type="ECO:0000256" key="2">
    <source>
        <dbReference type="SAM" id="MobiDB-lite"/>
    </source>
</evidence>
<evidence type="ECO:0000269" key="3">
    <source>
    </source>
</evidence>
<dbReference type="EMBL" id="CU329670">
    <property type="protein sequence ID" value="CAA92256.1"/>
    <property type="molecule type" value="Genomic_DNA"/>
</dbReference>
<dbReference type="PIR" id="T38735">
    <property type="entry name" value="T38735"/>
</dbReference>
<dbReference type="RefSeq" id="NP_593545.1">
    <property type="nucleotide sequence ID" value="NM_001018978.2"/>
</dbReference>
<dbReference type="BioGRID" id="279877">
    <property type="interactions" value="5"/>
</dbReference>
<dbReference type="STRING" id="284812.Q10069"/>
<dbReference type="iPTMnet" id="Q10069"/>
<dbReference type="PaxDb" id="4896-SPAC3H1.03.1"/>
<dbReference type="EnsemblFungi" id="SPAC3H1.03.1">
    <property type="protein sequence ID" value="SPAC3H1.03.1:pep"/>
    <property type="gene ID" value="SPAC3H1.03"/>
</dbReference>
<dbReference type="GeneID" id="2543457"/>
<dbReference type="KEGG" id="spo:2543457"/>
<dbReference type="PomBase" id="SPAC3H1.03">
    <property type="gene designation" value="mug151"/>
</dbReference>
<dbReference type="VEuPathDB" id="FungiDB:SPAC3H1.03"/>
<dbReference type="eggNOG" id="KOG2959">
    <property type="taxonomic scope" value="Eukaryota"/>
</dbReference>
<dbReference type="HOGENOM" id="CLU_1816926_0_0_1"/>
<dbReference type="InParanoid" id="Q10069"/>
<dbReference type="OMA" id="MPSATWI"/>
<dbReference type="PhylomeDB" id="Q10069"/>
<dbReference type="PRO" id="PR:Q10069"/>
<dbReference type="Proteomes" id="UP000002485">
    <property type="component" value="Chromosome I"/>
</dbReference>
<dbReference type="GO" id="GO:0005634">
    <property type="term" value="C:nucleus"/>
    <property type="evidence" value="ECO:0007669"/>
    <property type="project" value="UniProtKB-SubCell"/>
</dbReference>
<dbReference type="GO" id="GO:0051321">
    <property type="term" value="P:meiotic cell cycle"/>
    <property type="evidence" value="ECO:0007669"/>
    <property type="project" value="UniProtKB-KW"/>
</dbReference>
<dbReference type="GO" id="GO:0045814">
    <property type="term" value="P:negative regulation of gene expression, epigenetic"/>
    <property type="evidence" value="ECO:0000305"/>
    <property type="project" value="PomBase"/>
</dbReference>
<dbReference type="GO" id="GO:0006355">
    <property type="term" value="P:regulation of DNA-templated transcription"/>
    <property type="evidence" value="ECO:0007669"/>
    <property type="project" value="InterPro"/>
</dbReference>
<dbReference type="InterPro" id="IPR012479">
    <property type="entry name" value="SAP30BP"/>
</dbReference>
<dbReference type="PANTHER" id="PTHR13464:SF0">
    <property type="entry name" value="SAP30-BINDING PROTEIN"/>
    <property type="match status" value="1"/>
</dbReference>
<dbReference type="PANTHER" id="PTHR13464">
    <property type="entry name" value="TRANSCRIPTIONAL REGULATOR PROTEIN HCNGP"/>
    <property type="match status" value="1"/>
</dbReference>
<dbReference type="Pfam" id="PF07818">
    <property type="entry name" value="HCNGP"/>
    <property type="match status" value="1"/>
</dbReference>